<evidence type="ECO:0000269" key="1">
    <source>
    </source>
</evidence>
<evidence type="ECO:0000269" key="2">
    <source>
    </source>
</evidence>
<evidence type="ECO:0000303" key="3">
    <source>
    </source>
</evidence>
<evidence type="ECO:0000303" key="4">
    <source>
    </source>
</evidence>
<evidence type="ECO:0000305" key="5"/>
<evidence type="ECO:0000305" key="6">
    <source>
    </source>
</evidence>
<name>PGME_ASPTN</name>
<sequence length="335" mass="37771">MAETATRSDSGMFWKATTYKEQYWDGYLAARPKYSSDFYERIVDYYKAHNPSPPTPTVAHDVGTGPGQVASELCKYFDKVIASDPNSTHLAVASARNEKSGLNHKITWTEVSAEDLNSHYPAGSASFLAAAECLPLLDVPRALNTFAHLLHPNGTLAAWFYGRPVFSEPTVAAKCQPILNDIIDLTFEKVIKGAPPAHKTTWKRSTDTLYSFLDNVAFPTETWRDVYRFKWNPHLPLSVVGPNACDYPIEPSSCIDPEREKVVEAKDPHFWEEVWDIFEVRRFVECLLPNIEELKSKGVYDHVEVKYKELEEAMGGANAKKEITWPVVLILATRV</sequence>
<dbReference type="EC" id="2.1.1.-" evidence="6"/>
<dbReference type="EMBL" id="CH476601">
    <property type="protein sequence ID" value="EAU33969.1"/>
    <property type="molecule type" value="Genomic_DNA"/>
</dbReference>
<dbReference type="RefSeq" id="XP_001215386.1">
    <property type="nucleotide sequence ID" value="XM_001215386.1"/>
</dbReference>
<dbReference type="SMR" id="Q0CJC6"/>
<dbReference type="STRING" id="341663.Q0CJC6"/>
<dbReference type="EnsemblFungi" id="EAU33969">
    <property type="protein sequence ID" value="EAU33969"/>
    <property type="gene ID" value="ATEG_06208"/>
</dbReference>
<dbReference type="GeneID" id="4321477"/>
<dbReference type="VEuPathDB" id="FungiDB:ATEG_06208"/>
<dbReference type="eggNOG" id="KOG3010">
    <property type="taxonomic scope" value="Eukaryota"/>
</dbReference>
<dbReference type="HOGENOM" id="CLU_049344_0_0_1"/>
<dbReference type="OMA" id="WHSVERW"/>
<dbReference type="OrthoDB" id="10004862at2759"/>
<dbReference type="Proteomes" id="UP000007963">
    <property type="component" value="Unassembled WGS sequence"/>
</dbReference>
<dbReference type="GO" id="GO:0008757">
    <property type="term" value="F:S-adenosylmethionine-dependent methyltransferase activity"/>
    <property type="evidence" value="ECO:0007669"/>
    <property type="project" value="InterPro"/>
</dbReference>
<dbReference type="GO" id="GO:0032259">
    <property type="term" value="P:methylation"/>
    <property type="evidence" value="ECO:0007669"/>
    <property type="project" value="UniProtKB-KW"/>
</dbReference>
<dbReference type="CDD" id="cd02440">
    <property type="entry name" value="AdoMet_MTases"/>
    <property type="match status" value="1"/>
</dbReference>
<dbReference type="Gene3D" id="3.40.50.150">
    <property type="entry name" value="Vaccinia Virus protein VP39"/>
    <property type="match status" value="1"/>
</dbReference>
<dbReference type="InterPro" id="IPR051052">
    <property type="entry name" value="Diverse_substrate_MTase"/>
</dbReference>
<dbReference type="InterPro" id="IPR013216">
    <property type="entry name" value="Methyltransf_11"/>
</dbReference>
<dbReference type="InterPro" id="IPR029063">
    <property type="entry name" value="SAM-dependent_MTases_sf"/>
</dbReference>
<dbReference type="PANTHER" id="PTHR44942">
    <property type="entry name" value="METHYLTRANSF_11 DOMAIN-CONTAINING PROTEIN"/>
    <property type="match status" value="1"/>
</dbReference>
<dbReference type="PANTHER" id="PTHR44942:SF4">
    <property type="entry name" value="METHYLTRANSFERASE TYPE 11 DOMAIN-CONTAINING PROTEIN"/>
    <property type="match status" value="1"/>
</dbReference>
<dbReference type="Pfam" id="PF08241">
    <property type="entry name" value="Methyltransf_11"/>
    <property type="match status" value="1"/>
</dbReference>
<dbReference type="SUPFAM" id="SSF53335">
    <property type="entry name" value="S-adenosyl-L-methionine-dependent methyltransferases"/>
    <property type="match status" value="1"/>
</dbReference>
<protein>
    <recommendedName>
        <fullName evidence="4">Methyltransferase pgmE</fullName>
        <ecNumber evidence="6">2.1.1.-</ecNumber>
    </recommendedName>
    <alternativeName>
        <fullName evidence="4">Pigmented naphthoquinones biosynthesis cluster protein E</fullName>
    </alternativeName>
</protein>
<keyword id="KW-0489">Methyltransferase</keyword>
<keyword id="KW-1185">Reference proteome</keyword>
<keyword id="KW-0949">S-adenosyl-L-methionine</keyword>
<keyword id="KW-0808">Transferase</keyword>
<accession>Q0CJC6</accession>
<feature type="chain" id="PRO_0000456008" description="Methyltransferase pgmE">
    <location>
        <begin position="1"/>
        <end position="335"/>
    </location>
</feature>
<comment type="function">
    <text evidence="1 2 6">Methyltransferase; part of the gene cluster that mediates the biosynthesis of pleosporalin A, ascomycone A, as well as a third cryptic naphthoquinone derived pigment, all responsible for the coloration of conidia (PubMed:28471414, PubMed:35351612). Essential for the production of pleosporalin A, but not the 2 other final products (PubMed:35351612). The pathway begins with the biosynthesis of the cyclized heptaketide 3-acetonyl-1,6,8-trihydroxy-2-naphthaldehyde by the NR-PKS pgmA. The C-6 hydroxyl group is further methylated by the O-methyltransferase pgmB to yield fusarubinaldehyde which is in turn oxidized by the cytochrome P450 monooxygenase pgmC at C-9. The C-1 hydroxyl group is then methylated spontaneously. Although pgmE, pgmD and pgmH are essential for the production of pleosporalin A, it is not the case for the 2 other final products and it remains difficult to assign a specific function to each enzyme. PgmF and pgmG seem not to be involved in pigment biosynthesis although they were regulated by the cluster-specific transcription factor pgmR (Probable) (PubMed:35351612).</text>
</comment>
<comment type="pathway">
    <text evidence="2">Pigment biosynthesis.</text>
</comment>
<comment type="pathway">
    <text evidence="2">Secondary metabolite biosynthesis.</text>
</comment>
<comment type="induction">
    <text evidence="1 2">Expression is significantly up-regulated at the end of late growth phase, in the presence of Butyrolactone I (PubMed:28471414). Expression is positively regulated by the pgm cluster-specific transcription factor pgmR (PubMed:35351612).</text>
</comment>
<comment type="disruption phenotype">
    <text evidence="2">Does not affect the methylation of the naphthoquinones derived pigments and only abolishes the production of pleosporalin A but not of the 2 other final products.</text>
</comment>
<comment type="similarity">
    <text evidence="5">Belongs to the methyltransferase superfamily.</text>
</comment>
<organism>
    <name type="scientific">Aspergillus terreus (strain NIH 2624 / FGSC A1156)</name>
    <dbReference type="NCBI Taxonomy" id="341663"/>
    <lineage>
        <taxon>Eukaryota</taxon>
        <taxon>Fungi</taxon>
        <taxon>Dikarya</taxon>
        <taxon>Ascomycota</taxon>
        <taxon>Pezizomycotina</taxon>
        <taxon>Eurotiomycetes</taxon>
        <taxon>Eurotiomycetidae</taxon>
        <taxon>Eurotiales</taxon>
        <taxon>Aspergillaceae</taxon>
        <taxon>Aspergillus</taxon>
        <taxon>Aspergillus subgen. Circumdati</taxon>
    </lineage>
</organism>
<gene>
    <name evidence="3" type="primary">pgmE</name>
    <name type="ORF">ATEG_06208</name>
</gene>
<reference key="1">
    <citation type="submission" date="2005-09" db="EMBL/GenBank/DDBJ databases">
        <title>Annotation of the Aspergillus terreus NIH2624 genome.</title>
        <authorList>
            <person name="Birren B.W."/>
            <person name="Lander E.S."/>
            <person name="Galagan J.E."/>
            <person name="Nusbaum C."/>
            <person name="Devon K."/>
            <person name="Henn M."/>
            <person name="Ma L.-J."/>
            <person name="Jaffe D.B."/>
            <person name="Butler J."/>
            <person name="Alvarez P."/>
            <person name="Gnerre S."/>
            <person name="Grabherr M."/>
            <person name="Kleber M."/>
            <person name="Mauceli E.W."/>
            <person name="Brockman W."/>
            <person name="Rounsley S."/>
            <person name="Young S.K."/>
            <person name="LaButti K."/>
            <person name="Pushparaj V."/>
            <person name="DeCaprio D."/>
            <person name="Crawford M."/>
            <person name="Koehrsen M."/>
            <person name="Engels R."/>
            <person name="Montgomery P."/>
            <person name="Pearson M."/>
            <person name="Howarth C."/>
            <person name="Larson L."/>
            <person name="Luoma S."/>
            <person name="White J."/>
            <person name="Alvarado L."/>
            <person name="Kodira C.D."/>
            <person name="Zeng Q."/>
            <person name="Oleary S."/>
            <person name="Yandava C."/>
            <person name="Denning D.W."/>
            <person name="Nierman W.C."/>
            <person name="Milne T."/>
            <person name="Madden K."/>
        </authorList>
    </citation>
    <scope>NUCLEOTIDE SEQUENCE [LARGE SCALE GENOMIC DNA]</scope>
    <source>
        <strain>NIH 2624 / FGSC A1156</strain>
    </source>
</reference>
<reference key="2">
    <citation type="journal article" date="2017" name="Microorganisms">
        <title>Melanisation of Aspergillus terreus-is butyrolactone I involved in the regulation of both DOPA and DHN types of pigments in submerged culture?</title>
        <authorList>
            <person name="Palonen E.K."/>
            <person name="Raina S."/>
            <person name="Brandt A."/>
            <person name="Meriluoto J."/>
            <person name="Keshavarz T."/>
            <person name="Soini J.T."/>
        </authorList>
    </citation>
    <scope>IDENTIFICATION</scope>
    <scope>FUNCTION</scope>
    <scope>INDUCTION</scope>
    <source>
        <strain>MUCL38669</strain>
    </source>
</reference>
<reference key="3">
    <citation type="journal article" date="2022" name="Fungal Genet. Biol.">
        <title>Identification of a polyketide biosynthesis gene cluster by transcriptional regulator activation in Aspergillus terreus.</title>
        <authorList>
            <person name="Tang S."/>
            <person name="Men P."/>
            <person name="Zhang W."/>
            <person name="Li H."/>
            <person name="Li Z."/>
            <person name="Huang X."/>
            <person name="Lu X."/>
        </authorList>
    </citation>
    <scope>FUNCTION</scope>
    <scope>INDUCTION</scope>
    <scope>DISRUPTION PHENOTYPE</scope>
    <scope>PATHWAY</scope>
</reference>
<proteinExistence type="evidence at transcript level"/>